<feature type="transit peptide" description="Mitochondrion" evidence="1">
    <location>
        <begin position="1"/>
        <end position="31"/>
    </location>
</feature>
<feature type="chain" id="PRO_0000271006" description="Mitochondrial import inner membrane translocase subunit Tim29">
    <location>
        <begin position="32"/>
        <end position="260"/>
    </location>
</feature>
<feature type="topological domain" description="Mitochondrial matrix" evidence="6 7">
    <location>
        <begin position="32"/>
        <end position="59"/>
    </location>
</feature>
<feature type="transmembrane region" description="Helical" evidence="1">
    <location>
        <begin position="60"/>
        <end position="77"/>
    </location>
</feature>
<feature type="topological domain" description="Mitochondrial intermembrane" evidence="6 7">
    <location>
        <begin position="78"/>
        <end position="260"/>
    </location>
</feature>
<proteinExistence type="evidence at protein level"/>
<gene>
    <name evidence="8" type="primary">TIMM29</name>
    <name type="synonym">c19orf52</name>
</gene>
<protein>
    <recommendedName>
        <fullName evidence="4">Mitochondrial import inner membrane translocase subunit Tim29</fullName>
        <shortName evidence="4">TIM29</shortName>
    </recommendedName>
</protein>
<sequence>MAAAALRRFWSRRRAEAGDAVVAKPGVWARLGSWARALLRDYAEACRDASAEARARPGRAAVYVGLLGGAAACFTLAPSEGAFEEALLEASGTLLLLAPATRNRESEAFVQRLLWLRGRGRLRYVNLGLCSLVYEAPFDAQASLYQARCRYLQPRWTDFPGRVLDVGFVGRWWVLGAWMRDCDINDDEFLHLPAHLRVVGPQQLHSETNERLFDEKYKPVVLTDDQVDQALWEEQVLQKEKKDRLALSQAHSLVQAEAPR</sequence>
<accession>Q9BSF4</accession>
<accession>Q96EY6</accession>
<accession>Q96IT8</accession>
<keyword id="KW-0002">3D-structure</keyword>
<keyword id="KW-0472">Membrane</keyword>
<keyword id="KW-0496">Mitochondrion</keyword>
<keyword id="KW-0999">Mitochondrion inner membrane</keyword>
<keyword id="KW-0653">Protein transport</keyword>
<keyword id="KW-1267">Proteomics identification</keyword>
<keyword id="KW-1185">Reference proteome</keyword>
<keyword id="KW-0809">Transit peptide</keyword>
<keyword id="KW-0811">Translocation</keyword>
<keyword id="KW-0812">Transmembrane</keyword>
<keyword id="KW-1133">Transmembrane helix</keyword>
<keyword id="KW-0813">Transport</keyword>
<dbReference type="EMBL" id="AC011442">
    <property type="status" value="NOT_ANNOTATED_CDS"/>
    <property type="molecule type" value="Genomic_DNA"/>
</dbReference>
<dbReference type="EMBL" id="BC005075">
    <property type="protein sequence ID" value="AAH05075.2"/>
    <property type="molecule type" value="mRNA"/>
</dbReference>
<dbReference type="EMBL" id="BC007244">
    <property type="protein sequence ID" value="AAH07244.2"/>
    <property type="molecule type" value="mRNA"/>
</dbReference>
<dbReference type="EMBL" id="BC011833">
    <property type="protein sequence ID" value="AAH11833.1"/>
    <property type="molecule type" value="mRNA"/>
</dbReference>
<dbReference type="CCDS" id="CCDS12252.1"/>
<dbReference type="RefSeq" id="NP_612367.1">
    <property type="nucleotide sequence ID" value="NM_138358.4"/>
</dbReference>
<dbReference type="PDB" id="7CGP">
    <property type="method" value="EM"/>
    <property type="resolution" value="3.70 A"/>
    <property type="chains" value="C=1-260"/>
</dbReference>
<dbReference type="PDBsum" id="7CGP"/>
<dbReference type="EMDB" id="EMD-9958"/>
<dbReference type="SMR" id="Q9BSF4"/>
<dbReference type="BioGRID" id="124736">
    <property type="interactions" value="133"/>
</dbReference>
<dbReference type="ComplexPortal" id="CPX-6124">
    <property type="entry name" value="TIM22 mitochondrial inner membrane twin-pore carrier translocase complex"/>
</dbReference>
<dbReference type="CORUM" id="Q9BSF4"/>
<dbReference type="FunCoup" id="Q9BSF4">
    <property type="interactions" value="1573"/>
</dbReference>
<dbReference type="IntAct" id="Q9BSF4">
    <property type="interactions" value="45"/>
</dbReference>
<dbReference type="MINT" id="Q9BSF4"/>
<dbReference type="STRING" id="9606.ENSP00000270502"/>
<dbReference type="iPTMnet" id="Q9BSF4"/>
<dbReference type="PhosphoSitePlus" id="Q9BSF4"/>
<dbReference type="SwissPalm" id="Q9BSF4"/>
<dbReference type="BioMuta" id="TIMM29"/>
<dbReference type="DMDM" id="74732998"/>
<dbReference type="jPOST" id="Q9BSF4"/>
<dbReference type="MassIVE" id="Q9BSF4"/>
<dbReference type="PaxDb" id="9606-ENSP00000270502"/>
<dbReference type="PeptideAtlas" id="Q9BSF4"/>
<dbReference type="ProteomicsDB" id="78885"/>
<dbReference type="Pumba" id="Q9BSF4"/>
<dbReference type="Antibodypedia" id="51917">
    <property type="antibodies" value="37 antibodies from 14 providers"/>
</dbReference>
<dbReference type="DNASU" id="90580"/>
<dbReference type="Ensembl" id="ENST00000270502.7">
    <property type="protein sequence ID" value="ENSP00000270502.5"/>
    <property type="gene ID" value="ENSG00000142444.7"/>
</dbReference>
<dbReference type="GeneID" id="90580"/>
<dbReference type="KEGG" id="hsa:90580"/>
<dbReference type="MANE-Select" id="ENST00000270502.7">
    <property type="protein sequence ID" value="ENSP00000270502.5"/>
    <property type="RefSeq nucleotide sequence ID" value="NM_138358.4"/>
    <property type="RefSeq protein sequence ID" value="NP_612367.1"/>
</dbReference>
<dbReference type="UCSC" id="uc002mqd.3">
    <property type="organism name" value="human"/>
</dbReference>
<dbReference type="AGR" id="HGNC:25152"/>
<dbReference type="CTD" id="90580"/>
<dbReference type="DisGeNET" id="90580"/>
<dbReference type="GeneCards" id="TIMM29"/>
<dbReference type="HGNC" id="HGNC:25152">
    <property type="gene designation" value="TIMM29"/>
</dbReference>
<dbReference type="HPA" id="ENSG00000142444">
    <property type="expression patterns" value="Low tissue specificity"/>
</dbReference>
<dbReference type="MIM" id="617380">
    <property type="type" value="gene"/>
</dbReference>
<dbReference type="neXtProt" id="NX_Q9BSF4"/>
<dbReference type="OpenTargets" id="ENSG00000142444"/>
<dbReference type="PharmGKB" id="PA147358399"/>
<dbReference type="VEuPathDB" id="HostDB:ENSG00000142444"/>
<dbReference type="eggNOG" id="KOG4545">
    <property type="taxonomic scope" value="Eukaryota"/>
</dbReference>
<dbReference type="GeneTree" id="ENSGT00390000018541"/>
<dbReference type="HOGENOM" id="CLU_102697_0_0_1"/>
<dbReference type="InParanoid" id="Q9BSF4"/>
<dbReference type="OMA" id="WRLKWKM"/>
<dbReference type="OrthoDB" id="5970620at2759"/>
<dbReference type="PAN-GO" id="Q9BSF4">
    <property type="GO annotations" value="2 GO annotations based on evolutionary models"/>
</dbReference>
<dbReference type="PhylomeDB" id="Q9BSF4"/>
<dbReference type="TreeFam" id="TF313304"/>
<dbReference type="PathwayCommons" id="Q9BSF4"/>
<dbReference type="SignaLink" id="Q9BSF4"/>
<dbReference type="SIGNOR" id="Q9BSF4"/>
<dbReference type="BioGRID-ORCS" id="90580">
    <property type="hits" value="448 hits in 1145 CRISPR screens"/>
</dbReference>
<dbReference type="ChiTaRS" id="C19orf52">
    <property type="organism name" value="human"/>
</dbReference>
<dbReference type="GenomeRNAi" id="90580"/>
<dbReference type="Pharos" id="Q9BSF4">
    <property type="development level" value="Tdark"/>
</dbReference>
<dbReference type="PRO" id="PR:Q9BSF4"/>
<dbReference type="Proteomes" id="UP000005640">
    <property type="component" value="Chromosome 19"/>
</dbReference>
<dbReference type="RNAct" id="Q9BSF4">
    <property type="molecule type" value="protein"/>
</dbReference>
<dbReference type="Bgee" id="ENSG00000142444">
    <property type="expression patterns" value="Expressed in monocyte and 108 other cell types or tissues"/>
</dbReference>
<dbReference type="ExpressionAtlas" id="Q9BSF4">
    <property type="expression patterns" value="baseline and differential"/>
</dbReference>
<dbReference type="GO" id="GO:0005743">
    <property type="term" value="C:mitochondrial inner membrane"/>
    <property type="evidence" value="ECO:0000314"/>
    <property type="project" value="UniProtKB"/>
</dbReference>
<dbReference type="GO" id="GO:0005758">
    <property type="term" value="C:mitochondrial intermembrane space"/>
    <property type="evidence" value="ECO:0000314"/>
    <property type="project" value="UniProtKB"/>
</dbReference>
<dbReference type="GO" id="GO:0005739">
    <property type="term" value="C:mitochondrion"/>
    <property type="evidence" value="ECO:0006056"/>
    <property type="project" value="FlyBase"/>
</dbReference>
<dbReference type="GO" id="GO:0042721">
    <property type="term" value="C:TIM22 mitochondrial import inner membrane insertion complex"/>
    <property type="evidence" value="ECO:0000314"/>
    <property type="project" value="UniProtKB"/>
</dbReference>
<dbReference type="GO" id="GO:0140318">
    <property type="term" value="F:protein transporter activity"/>
    <property type="evidence" value="ECO:0000315"/>
    <property type="project" value="FlyBase"/>
</dbReference>
<dbReference type="GO" id="GO:0045039">
    <property type="term" value="P:protein insertion into mitochondrial inner membrane"/>
    <property type="evidence" value="ECO:0000314"/>
    <property type="project" value="UniProtKB"/>
</dbReference>
<dbReference type="InterPro" id="IPR019322">
    <property type="entry name" value="TIMM29"/>
</dbReference>
<dbReference type="PANTHER" id="PTHR21435">
    <property type="entry name" value="MITOCHONDRIAL IMPORT INNER MEMBRANE TRANSLOCASE SUBUNIT TIM29"/>
    <property type="match status" value="1"/>
</dbReference>
<dbReference type="PANTHER" id="PTHR21435:SF1">
    <property type="entry name" value="MITOCHONDRIAL IMPORT INNER MEMBRANE TRANSLOCASE SUBUNIT TIM29"/>
    <property type="match status" value="1"/>
</dbReference>
<dbReference type="Pfam" id="PF10171">
    <property type="entry name" value="Tim29"/>
    <property type="match status" value="1"/>
</dbReference>
<evidence type="ECO:0000255" key="1"/>
<evidence type="ECO:0000269" key="2">
    <source>
    </source>
</evidence>
<evidence type="ECO:0000269" key="3">
    <source>
    </source>
</evidence>
<evidence type="ECO:0000303" key="4">
    <source>
    </source>
</evidence>
<evidence type="ECO:0000305" key="5"/>
<evidence type="ECO:0000305" key="6">
    <source>
    </source>
</evidence>
<evidence type="ECO:0000305" key="7">
    <source>
    </source>
</evidence>
<evidence type="ECO:0000312" key="8">
    <source>
        <dbReference type="HGNC" id="HGNC:25152"/>
    </source>
</evidence>
<reference key="1">
    <citation type="journal article" date="2004" name="Nature">
        <title>The DNA sequence and biology of human chromosome 19.</title>
        <authorList>
            <person name="Grimwood J."/>
            <person name="Gordon L.A."/>
            <person name="Olsen A.S."/>
            <person name="Terry A."/>
            <person name="Schmutz J."/>
            <person name="Lamerdin J.E."/>
            <person name="Hellsten U."/>
            <person name="Goodstein D."/>
            <person name="Couronne O."/>
            <person name="Tran-Gyamfi M."/>
            <person name="Aerts A."/>
            <person name="Altherr M."/>
            <person name="Ashworth L."/>
            <person name="Bajorek E."/>
            <person name="Black S."/>
            <person name="Branscomb E."/>
            <person name="Caenepeel S."/>
            <person name="Carrano A.V."/>
            <person name="Caoile C."/>
            <person name="Chan Y.M."/>
            <person name="Christensen M."/>
            <person name="Cleland C.A."/>
            <person name="Copeland A."/>
            <person name="Dalin E."/>
            <person name="Dehal P."/>
            <person name="Denys M."/>
            <person name="Detter J.C."/>
            <person name="Escobar J."/>
            <person name="Flowers D."/>
            <person name="Fotopulos D."/>
            <person name="Garcia C."/>
            <person name="Georgescu A.M."/>
            <person name="Glavina T."/>
            <person name="Gomez M."/>
            <person name="Gonzales E."/>
            <person name="Groza M."/>
            <person name="Hammon N."/>
            <person name="Hawkins T."/>
            <person name="Haydu L."/>
            <person name="Ho I."/>
            <person name="Huang W."/>
            <person name="Israni S."/>
            <person name="Jett J."/>
            <person name="Kadner K."/>
            <person name="Kimball H."/>
            <person name="Kobayashi A."/>
            <person name="Larionov V."/>
            <person name="Leem S.-H."/>
            <person name="Lopez F."/>
            <person name="Lou Y."/>
            <person name="Lowry S."/>
            <person name="Malfatti S."/>
            <person name="Martinez D."/>
            <person name="McCready P.M."/>
            <person name="Medina C."/>
            <person name="Morgan J."/>
            <person name="Nelson K."/>
            <person name="Nolan M."/>
            <person name="Ovcharenko I."/>
            <person name="Pitluck S."/>
            <person name="Pollard M."/>
            <person name="Popkie A.P."/>
            <person name="Predki P."/>
            <person name="Quan G."/>
            <person name="Ramirez L."/>
            <person name="Rash S."/>
            <person name="Retterer J."/>
            <person name="Rodriguez A."/>
            <person name="Rogers S."/>
            <person name="Salamov A."/>
            <person name="Salazar A."/>
            <person name="She X."/>
            <person name="Smith D."/>
            <person name="Slezak T."/>
            <person name="Solovyev V."/>
            <person name="Thayer N."/>
            <person name="Tice H."/>
            <person name="Tsai M."/>
            <person name="Ustaszewska A."/>
            <person name="Vo N."/>
            <person name="Wagner M."/>
            <person name="Wheeler J."/>
            <person name="Wu K."/>
            <person name="Xie G."/>
            <person name="Yang J."/>
            <person name="Dubchak I."/>
            <person name="Furey T.S."/>
            <person name="DeJong P."/>
            <person name="Dickson M."/>
            <person name="Gordon D."/>
            <person name="Eichler E.E."/>
            <person name="Pennacchio L.A."/>
            <person name="Richardson P."/>
            <person name="Stubbs L."/>
            <person name="Rokhsar D.S."/>
            <person name="Myers R.M."/>
            <person name="Rubin E.M."/>
            <person name="Lucas S.M."/>
        </authorList>
    </citation>
    <scope>NUCLEOTIDE SEQUENCE [LARGE SCALE GENOMIC DNA]</scope>
</reference>
<reference key="2">
    <citation type="journal article" date="2004" name="Genome Res.">
        <title>The status, quality, and expansion of the NIH full-length cDNA project: the Mammalian Gene Collection (MGC).</title>
        <authorList>
            <consortium name="The MGC Project Team"/>
        </authorList>
    </citation>
    <scope>NUCLEOTIDE SEQUENCE [LARGE SCALE MRNA]</scope>
    <source>
        <tissue>Lung</tissue>
        <tissue>Lymph</tissue>
    </source>
</reference>
<reference key="3">
    <citation type="journal article" date="2011" name="BMC Syst. Biol.">
        <title>Initial characterization of the human central proteome.</title>
        <authorList>
            <person name="Burkard T.R."/>
            <person name="Planyavsky M."/>
            <person name="Kaupe I."/>
            <person name="Breitwieser F.P."/>
            <person name="Buerckstuemmer T."/>
            <person name="Bennett K.L."/>
            <person name="Superti-Furga G."/>
            <person name="Colinge J."/>
        </authorList>
    </citation>
    <scope>IDENTIFICATION BY MASS SPECTROMETRY [LARGE SCALE ANALYSIS]</scope>
</reference>
<reference key="4">
    <citation type="journal article" date="2015" name="Proteomics">
        <title>N-terminome analysis of the human mitochondrial proteome.</title>
        <authorList>
            <person name="Vaca Jacome A.S."/>
            <person name="Rabilloud T."/>
            <person name="Schaeffer-Reiss C."/>
            <person name="Rompais M."/>
            <person name="Ayoub D."/>
            <person name="Lane L."/>
            <person name="Bairoch A."/>
            <person name="Van Dorsselaer A."/>
            <person name="Carapito C."/>
        </authorList>
    </citation>
    <scope>IDENTIFICATION BY MASS SPECTROMETRY [LARGE SCALE ANALYSIS]</scope>
</reference>
<reference key="5">
    <citation type="journal article" date="2016" name="Elife">
        <title>Tim29 is a novel subunit of the human TIM22 translocase and is involved in complex assembly and stability.</title>
        <authorList>
            <person name="Kang Y."/>
            <person name="Baker M.J."/>
            <person name="Liem M."/>
            <person name="Louber J."/>
            <person name="McKenzie M."/>
            <person name="Atukorala I."/>
            <person name="Ang C.S."/>
            <person name="Keerthikumar S."/>
            <person name="Mathivanan S."/>
            <person name="Stojanovski D."/>
        </authorList>
    </citation>
    <scope>SUBCELLULAR LOCATION</scope>
    <scope>TOPOLOGY</scope>
    <scope>INTERACTION WITH TIMM10B AND TOMM40</scope>
    <scope>FUNCTION</scope>
    <scope>IDENTIFICATION IN THE TIM22 COMPLEX</scope>
    <scope>IDENTIFICATION BY MASS SPECTROMETRY</scope>
</reference>
<reference key="6">
    <citation type="journal article" date="2016" name="FEBS Lett.">
        <title>TIM29 is a subunit of the human carrier translocase required for protein transport.</title>
        <authorList>
            <person name="Callegari S."/>
            <person name="Richter F."/>
            <person name="Chojnacka K."/>
            <person name="Jans D.C."/>
            <person name="Lorenzi I."/>
            <person name="Pacheu-Grau D."/>
            <person name="Jakobs S."/>
            <person name="Lenz C."/>
            <person name="Urlaub H."/>
            <person name="Dudek J."/>
            <person name="Chacinska A."/>
            <person name="Rehling P."/>
        </authorList>
    </citation>
    <scope>SUBCELLULAR LOCATION</scope>
    <scope>TOPOLOGY</scope>
    <scope>IDENTIFICATION IN THE TIM22 COMPLEX</scope>
    <scope>INTERACTION WITH TRIMM22</scope>
    <scope>IDENTIFICATION BY MASS SPECTROMETRY</scope>
    <scope>FUNCTION</scope>
</reference>
<reference key="7">
    <citation type="journal article" date="2017" name="Mol. Cell">
        <title>Acylglycerol kinase mutated in Sengers Syndrome is a subunit of the TIM22 protein translocase in mitochondria.</title>
        <authorList>
            <person name="Vukotic M."/>
            <person name="Nolte H."/>
            <person name="Koenig T."/>
            <person name="Saita S."/>
            <person name="Ananjew M."/>
            <person name="Krueger M."/>
            <person name="Tatsuta T."/>
            <person name="Langer T."/>
        </authorList>
    </citation>
    <scope>IDENTIFICATION IN THE TIM22 COMPLEX</scope>
</reference>
<reference key="8">
    <citation type="journal article" date="2017" name="Mol. Cell">
        <title>Sengers syndrome-associated mitochondrial acylglycerol kinase is a subunit of the human TIM22 protein import complex.</title>
        <authorList>
            <person name="Kang Y."/>
            <person name="Stroud D.A."/>
            <person name="Baker M.J."/>
            <person name="De Souza D.P."/>
            <person name="Frazier A.E."/>
            <person name="Liem M."/>
            <person name="Tull D."/>
            <person name="Mathivanan S."/>
            <person name="McConville M.J."/>
            <person name="Thorburn D.R."/>
            <person name="Ryan M.T."/>
            <person name="Stojanovski D."/>
        </authorList>
    </citation>
    <scope>IDENTIFICATION IN THE TIM22 COMPLEX</scope>
</reference>
<organism>
    <name type="scientific">Homo sapiens</name>
    <name type="common">Human</name>
    <dbReference type="NCBI Taxonomy" id="9606"/>
    <lineage>
        <taxon>Eukaryota</taxon>
        <taxon>Metazoa</taxon>
        <taxon>Chordata</taxon>
        <taxon>Craniata</taxon>
        <taxon>Vertebrata</taxon>
        <taxon>Euteleostomi</taxon>
        <taxon>Mammalia</taxon>
        <taxon>Eutheria</taxon>
        <taxon>Euarchontoglires</taxon>
        <taxon>Primates</taxon>
        <taxon>Haplorrhini</taxon>
        <taxon>Catarrhini</taxon>
        <taxon>Hominidae</taxon>
        <taxon>Homo</taxon>
    </lineage>
</organism>
<comment type="function">
    <text evidence="2 3">Component of the TIM22 complex, a complex that mediates the import and insertion of multi-pass transmembrane proteins into the mitochondrial inner membrane. The TIM22 complex forms a twin-pore translocase that uses the membrane potential as the external driving force. Required for the stability of the TIM22 complex and functions in the assembly of the TIMM22 protein into the TIM22 complex. May facilitate cooperation between TIM22 and TOM complexes by interacting with TOMM40.</text>
</comment>
<comment type="subunit">
    <text evidence="2 3">Component of the TIM22 complex, which core is composed of TIMM22, associated with TIMM10 (TIMM10A and/or TIMM10B), TIMM9, AGK and TIMM29 (PubMed:27554484, PubMed:27718247, PubMed:28712724, PubMed:28712726). Interacts with TIMM10B; the interaction is direct (PubMed:27554484). Interacts with TOMM40; linking the TIM22 complex to the TOM complex (PubMed:27554484). Interacts with TIMM22 (when oxidized); the interaction is direct (PubMed:27718247).</text>
</comment>
<comment type="interaction">
    <interactant intactId="EBI-10974729">
        <id>Q9BSF4</id>
    </interactant>
    <interactant intactId="EBI-14035397">
        <id>P16050</id>
        <label>ALOX15</label>
    </interactant>
    <organismsDiffer>false</organismsDiffer>
    <experiments>2</experiments>
</comment>
<comment type="subcellular location">
    <subcellularLocation>
        <location evidence="2 3">Mitochondrion inner membrane</location>
        <topology evidence="5">Single-pass membrane protein</topology>
        <orientation evidence="3">Intermembrane side</orientation>
    </subcellularLocation>
</comment>
<name>TIM29_HUMAN</name>